<accession>Q7VAS9</accession>
<organism>
    <name type="scientific">Prochlorococcus marinus (strain SARG / CCMP1375 / SS120)</name>
    <dbReference type="NCBI Taxonomy" id="167539"/>
    <lineage>
        <taxon>Bacteria</taxon>
        <taxon>Bacillati</taxon>
        <taxon>Cyanobacteriota</taxon>
        <taxon>Cyanophyceae</taxon>
        <taxon>Synechococcales</taxon>
        <taxon>Prochlorococcaceae</taxon>
        <taxon>Prochlorococcus</taxon>
    </lineage>
</organism>
<name>ARGD_PROMA</name>
<keyword id="KW-0028">Amino-acid biosynthesis</keyword>
<keyword id="KW-0032">Aminotransferase</keyword>
<keyword id="KW-0055">Arginine biosynthesis</keyword>
<keyword id="KW-0963">Cytoplasm</keyword>
<keyword id="KW-0663">Pyridoxal phosphate</keyword>
<keyword id="KW-1185">Reference proteome</keyword>
<keyword id="KW-0808">Transferase</keyword>
<dbReference type="EC" id="2.6.1.11" evidence="1"/>
<dbReference type="EMBL" id="AE017126">
    <property type="protein sequence ID" value="AAQ00419.1"/>
    <property type="status" value="ALT_INIT"/>
    <property type="molecule type" value="Genomic_DNA"/>
</dbReference>
<dbReference type="RefSeq" id="NP_875766.1">
    <property type="nucleotide sequence ID" value="NC_005042.1"/>
</dbReference>
<dbReference type="SMR" id="Q7VAS9"/>
<dbReference type="STRING" id="167539.Pro_1375"/>
<dbReference type="EnsemblBacteria" id="AAQ00419">
    <property type="protein sequence ID" value="AAQ00419"/>
    <property type="gene ID" value="Pro_1375"/>
</dbReference>
<dbReference type="KEGG" id="pma:Pro_1375"/>
<dbReference type="PATRIC" id="fig|167539.5.peg.1442"/>
<dbReference type="eggNOG" id="COG4992">
    <property type="taxonomic scope" value="Bacteria"/>
</dbReference>
<dbReference type="HOGENOM" id="CLU_016922_10_1_3"/>
<dbReference type="OrthoDB" id="9807885at2"/>
<dbReference type="UniPathway" id="UPA00068">
    <property type="reaction ID" value="UER00109"/>
</dbReference>
<dbReference type="Proteomes" id="UP000001420">
    <property type="component" value="Chromosome"/>
</dbReference>
<dbReference type="GO" id="GO:0005737">
    <property type="term" value="C:cytoplasm"/>
    <property type="evidence" value="ECO:0007669"/>
    <property type="project" value="UniProtKB-SubCell"/>
</dbReference>
<dbReference type="GO" id="GO:0042802">
    <property type="term" value="F:identical protein binding"/>
    <property type="evidence" value="ECO:0007669"/>
    <property type="project" value="TreeGrafter"/>
</dbReference>
<dbReference type="GO" id="GO:0003992">
    <property type="term" value="F:N2-acetyl-L-ornithine:2-oxoglutarate 5-aminotransferase activity"/>
    <property type="evidence" value="ECO:0007669"/>
    <property type="project" value="UniProtKB-UniRule"/>
</dbReference>
<dbReference type="GO" id="GO:0030170">
    <property type="term" value="F:pyridoxal phosphate binding"/>
    <property type="evidence" value="ECO:0007669"/>
    <property type="project" value="InterPro"/>
</dbReference>
<dbReference type="GO" id="GO:0006526">
    <property type="term" value="P:L-arginine biosynthetic process"/>
    <property type="evidence" value="ECO:0007669"/>
    <property type="project" value="UniProtKB-UniRule"/>
</dbReference>
<dbReference type="CDD" id="cd00610">
    <property type="entry name" value="OAT_like"/>
    <property type="match status" value="1"/>
</dbReference>
<dbReference type="FunFam" id="3.40.640.10:FF:000004">
    <property type="entry name" value="Acetylornithine aminotransferase"/>
    <property type="match status" value="1"/>
</dbReference>
<dbReference type="Gene3D" id="3.90.1150.10">
    <property type="entry name" value="Aspartate Aminotransferase, domain 1"/>
    <property type="match status" value="1"/>
</dbReference>
<dbReference type="Gene3D" id="3.40.640.10">
    <property type="entry name" value="Type I PLP-dependent aspartate aminotransferase-like (Major domain)"/>
    <property type="match status" value="1"/>
</dbReference>
<dbReference type="HAMAP" id="MF_01107">
    <property type="entry name" value="ArgD_aminotrans_3"/>
    <property type="match status" value="1"/>
</dbReference>
<dbReference type="InterPro" id="IPR004636">
    <property type="entry name" value="AcOrn/SuccOrn_fam"/>
</dbReference>
<dbReference type="InterPro" id="IPR005814">
    <property type="entry name" value="Aminotrans_3"/>
</dbReference>
<dbReference type="InterPro" id="IPR049704">
    <property type="entry name" value="Aminotrans_3_PPA_site"/>
</dbReference>
<dbReference type="InterPro" id="IPR050103">
    <property type="entry name" value="Class-III_PLP-dep_AT"/>
</dbReference>
<dbReference type="InterPro" id="IPR015424">
    <property type="entry name" value="PyrdxlP-dep_Trfase"/>
</dbReference>
<dbReference type="InterPro" id="IPR015421">
    <property type="entry name" value="PyrdxlP-dep_Trfase_major"/>
</dbReference>
<dbReference type="InterPro" id="IPR015422">
    <property type="entry name" value="PyrdxlP-dep_Trfase_small"/>
</dbReference>
<dbReference type="NCBIfam" id="TIGR00707">
    <property type="entry name" value="argD"/>
    <property type="match status" value="1"/>
</dbReference>
<dbReference type="NCBIfam" id="NF002325">
    <property type="entry name" value="PRK01278.1"/>
    <property type="match status" value="1"/>
</dbReference>
<dbReference type="PANTHER" id="PTHR11986:SF79">
    <property type="entry name" value="ACETYLORNITHINE AMINOTRANSFERASE, MITOCHONDRIAL"/>
    <property type="match status" value="1"/>
</dbReference>
<dbReference type="PANTHER" id="PTHR11986">
    <property type="entry name" value="AMINOTRANSFERASE CLASS III"/>
    <property type="match status" value="1"/>
</dbReference>
<dbReference type="Pfam" id="PF00202">
    <property type="entry name" value="Aminotran_3"/>
    <property type="match status" value="1"/>
</dbReference>
<dbReference type="PIRSF" id="PIRSF000521">
    <property type="entry name" value="Transaminase_4ab_Lys_Orn"/>
    <property type="match status" value="1"/>
</dbReference>
<dbReference type="SUPFAM" id="SSF53383">
    <property type="entry name" value="PLP-dependent transferases"/>
    <property type="match status" value="1"/>
</dbReference>
<dbReference type="PROSITE" id="PS00600">
    <property type="entry name" value="AA_TRANSFER_CLASS_3"/>
    <property type="match status" value="1"/>
</dbReference>
<proteinExistence type="inferred from homology"/>
<gene>
    <name evidence="1" type="primary">argD</name>
    <name type="ordered locus">Pro_1375</name>
</gene>
<protein>
    <recommendedName>
        <fullName evidence="1">Acetylornithine aminotransferase</fullName>
        <shortName evidence="1">ACOAT</shortName>
        <ecNumber evidence="1">2.6.1.11</ecNumber>
    </recommendedName>
</protein>
<evidence type="ECO:0000255" key="1">
    <source>
        <dbReference type="HAMAP-Rule" id="MF_01107"/>
    </source>
</evidence>
<evidence type="ECO:0000305" key="2"/>
<reference key="1">
    <citation type="journal article" date="2003" name="Proc. Natl. Acad. Sci. U.S.A.">
        <title>Genome sequence of the cyanobacterium Prochlorococcus marinus SS120, a nearly minimal oxyphototrophic genome.</title>
        <authorList>
            <person name="Dufresne A."/>
            <person name="Salanoubat M."/>
            <person name="Partensky F."/>
            <person name="Artiguenave F."/>
            <person name="Axmann I.M."/>
            <person name="Barbe V."/>
            <person name="Duprat S."/>
            <person name="Galperin M.Y."/>
            <person name="Koonin E.V."/>
            <person name="Le Gall F."/>
            <person name="Makarova K.S."/>
            <person name="Ostrowski M."/>
            <person name="Oztas S."/>
            <person name="Robert C."/>
            <person name="Rogozin I.B."/>
            <person name="Scanlan D.J."/>
            <person name="Tandeau de Marsac N."/>
            <person name="Weissenbach J."/>
            <person name="Wincker P."/>
            <person name="Wolf Y.I."/>
            <person name="Hess W.R."/>
        </authorList>
    </citation>
    <scope>NUCLEOTIDE SEQUENCE [LARGE SCALE GENOMIC DNA]</scope>
    <source>
        <strain>SARG / CCMP1375 / SS120</strain>
    </source>
</reference>
<comment type="catalytic activity">
    <reaction evidence="1">
        <text>N(2)-acetyl-L-ornithine + 2-oxoglutarate = N-acetyl-L-glutamate 5-semialdehyde + L-glutamate</text>
        <dbReference type="Rhea" id="RHEA:18049"/>
        <dbReference type="ChEBI" id="CHEBI:16810"/>
        <dbReference type="ChEBI" id="CHEBI:29123"/>
        <dbReference type="ChEBI" id="CHEBI:29985"/>
        <dbReference type="ChEBI" id="CHEBI:57805"/>
        <dbReference type="EC" id="2.6.1.11"/>
    </reaction>
</comment>
<comment type="cofactor">
    <cofactor evidence="1">
        <name>pyridoxal 5'-phosphate</name>
        <dbReference type="ChEBI" id="CHEBI:597326"/>
    </cofactor>
    <text evidence="1">Binds 1 pyridoxal phosphate per subunit.</text>
</comment>
<comment type="pathway">
    <text evidence="1">Amino-acid biosynthesis; L-arginine biosynthesis; N(2)-acetyl-L-ornithine from L-glutamate: step 4/4.</text>
</comment>
<comment type="subunit">
    <text evidence="1">Homodimer.</text>
</comment>
<comment type="subcellular location">
    <subcellularLocation>
        <location evidence="1">Cytoplasm</location>
    </subcellularLocation>
</comment>
<comment type="miscellaneous">
    <text evidence="1">May also have succinyldiaminopimelate aminotransferase activity, thus carrying out the corresponding step in lysine biosynthesis.</text>
</comment>
<comment type="similarity">
    <text evidence="1">Belongs to the class-III pyridoxal-phosphate-dependent aminotransferase family. ArgD subfamily.</text>
</comment>
<comment type="sequence caution" evidence="2">
    <conflict type="erroneous initiation">
        <sequence resource="EMBL-CDS" id="AAQ00419"/>
    </conflict>
</comment>
<feature type="chain" id="PRO_0000112765" description="Acetylornithine aminotransferase">
    <location>
        <begin position="1"/>
        <end position="419"/>
    </location>
</feature>
<feature type="binding site" evidence="1">
    <location>
        <begin position="116"/>
        <end position="117"/>
    </location>
    <ligand>
        <name>pyridoxal 5'-phosphate</name>
        <dbReference type="ChEBI" id="CHEBI:597326"/>
    </ligand>
</feature>
<feature type="binding site" evidence="1">
    <location>
        <position position="149"/>
    </location>
    <ligand>
        <name>pyridoxal 5'-phosphate</name>
        <dbReference type="ChEBI" id="CHEBI:597326"/>
    </ligand>
</feature>
<feature type="binding site" evidence="1">
    <location>
        <position position="152"/>
    </location>
    <ligand>
        <name>N(2)-acetyl-L-ornithine</name>
        <dbReference type="ChEBI" id="CHEBI:57805"/>
    </ligand>
</feature>
<feature type="binding site" evidence="1">
    <location>
        <begin position="240"/>
        <end position="243"/>
    </location>
    <ligand>
        <name>pyridoxal 5'-phosphate</name>
        <dbReference type="ChEBI" id="CHEBI:597326"/>
    </ligand>
</feature>
<feature type="binding site" evidence="1">
    <location>
        <position position="296"/>
    </location>
    <ligand>
        <name>N(2)-acetyl-L-ornithine</name>
        <dbReference type="ChEBI" id="CHEBI:57805"/>
    </ligand>
</feature>
<feature type="binding site" evidence="1">
    <location>
        <position position="297"/>
    </location>
    <ligand>
        <name>pyridoxal 5'-phosphate</name>
        <dbReference type="ChEBI" id="CHEBI:597326"/>
    </ligand>
</feature>
<feature type="modified residue" description="N6-(pyridoxal phosphate)lysine" evidence="1">
    <location>
        <position position="269"/>
    </location>
</feature>
<sequence>MVDAPHSKCGTFGFVGSSPTAPTFLLDTYKRLPLKIVKGNGCWLWDETGKKYLDAVAGIATCSLGHSDKKLSKVLSQQLRKIQHVSNLYRIPEQEDLAQWLVNQSCADSVFFCNSGAEANEAAIKLARKYGQIKRGIKRPIILSAKSSFHGRTLAALSATGQTKYQKGFEPLVEGFEFFSFNDSNSVQDLYENLEKDEPRVAAILIEPIQGEGGLNLGDQKFFYFLRDYCNKNNILLLFDEVQSGMGRTGKLWGYEHFNVEPDAFTLAKGLGGGHSIGALLVKENASIFEPGDHASTFGGNPFACKAGLTVAKEIQNRNLLENTYCRGNQLREGLQKLINNYPHHLEEVRGIGLMLGLAIKKNSNLTSQKIVELAIKEGLLVIGAGEKVIRMLPPLIITKREIETLLTRLNACFRKLNN</sequence>